<feature type="chain" id="PRO_0000339006" description="Uncharacterized protein ORF19">
    <location>
        <begin position="1"/>
        <end position="453"/>
    </location>
</feature>
<protein>
    <recommendedName>
        <fullName>Uncharacterized protein ORF19</fullName>
    </recommendedName>
</protein>
<organismHost>
    <name type="scientific">Galliformes</name>
    <dbReference type="NCBI Taxonomy" id="8976"/>
</organismHost>
<keyword id="KW-1185">Reference proteome</keyword>
<name>YO19_ADEG1</name>
<gene>
    <name type="ORF">19</name>
</gene>
<reference key="1">
    <citation type="journal article" date="1996" name="J. Virol.">
        <title>The complete DNA sequence and genomic organization of the avian adenovirus CELO.</title>
        <authorList>
            <person name="Chiocca S."/>
            <person name="Kurzbauer R."/>
            <person name="Schaffner G."/>
            <person name="Baker A."/>
            <person name="Mautner V."/>
            <person name="Cotten M."/>
        </authorList>
    </citation>
    <scope>NUCLEOTIDE SEQUENCE [LARGE SCALE GENOMIC DNA]</scope>
</reference>
<dbReference type="EMBL" id="U46933">
    <property type="protein sequence ID" value="AAC54924.1"/>
    <property type="molecule type" value="Genomic_DNA"/>
</dbReference>
<dbReference type="RefSeq" id="NP_043898.1">
    <property type="nucleotide sequence ID" value="NC_001720.1"/>
</dbReference>
<dbReference type="ESTHER" id="aviad-Q64767">
    <property type="family name" value="Avian-virus_vlip"/>
</dbReference>
<dbReference type="KEGG" id="vg:1733466"/>
<dbReference type="Proteomes" id="UP000001594">
    <property type="component" value="Segment"/>
</dbReference>
<dbReference type="Gene3D" id="3.40.50.1820">
    <property type="entry name" value="alpha/beta hydrolase"/>
    <property type="match status" value="1"/>
</dbReference>
<dbReference type="InterPro" id="IPR029058">
    <property type="entry name" value="AB_hydrolase_fold"/>
</dbReference>
<proteinExistence type="predicted"/>
<accession>Q64767</accession>
<organism>
    <name type="scientific">Fowl adenovirus A serotype 1 (strain CELO / Phelps)</name>
    <name type="common">FAdV-1</name>
    <name type="synonym">Avian adenovirus gal1 (strain Phelps)</name>
    <dbReference type="NCBI Taxonomy" id="10553"/>
    <lineage>
        <taxon>Viruses</taxon>
        <taxon>Varidnaviria</taxon>
        <taxon>Bamfordvirae</taxon>
        <taxon>Preplasmiviricota</taxon>
        <taxon>Tectiliviricetes</taxon>
        <taxon>Rowavirales</taxon>
        <taxon>Adenoviridae</taxon>
        <taxon>Aviadenovirus</taxon>
        <taxon>Fowl aviadenovirus A</taxon>
    </lineage>
</organism>
<sequence>MRGFVPPTSSPDRGSKKVGRIVALDPPLESFQGYRMDLHTKGLNLLLSSGGHWSANRDADSVISRDDADYVVVIASSIGSYGFDRPIGDEYIRSDLTGQKHEACESRAWWKGQICAWSYSGRRHCEDVHIPFDFLRSDGLCYHIMAPLTFMKALDTHQADQLLSMHGSVPSAWSAYVTGRDYSQPTQYYTEEVADWRMLLREDDMASSYLLLVVTEGNAAELWTYDPYYTKTIGMEHGYSVRWYFIRDRNVGEAPIVLYARGGGVLKFIRLYKGRGTLTSLGARAMTTQEVTEFTCFRTHTYYFTGTKKYDCHPGGHRFDVPRWRSHINVSAHHLPVPPKCGCLKFPKLFKDYVIFDHPNVVGRAGEYVSLGPWSTGLQAVVTFKPQPRRHRVVLATYWDACSNTKRRVGIDVRTDRKNHMVWLKADKPVSREMWFVSEVDVVRVYVTWLSPE</sequence>